<geneLocation type="chloroplast"/>
<organism>
    <name type="scientific">Pleurastrum terricola</name>
    <name type="common">Filamentous green alga</name>
    <name type="synonym">Leptosira terrestris</name>
    <dbReference type="NCBI Taxonomy" id="34116"/>
    <lineage>
        <taxon>Eukaryota</taxon>
        <taxon>Viridiplantae</taxon>
        <taxon>Chlorophyta</taxon>
        <taxon>core chlorophytes</taxon>
        <taxon>Chlorophyceae</taxon>
        <taxon>CS clade</taxon>
        <taxon>Chlamydomonadales</taxon>
        <taxon>Pleurastraceae</taxon>
        <taxon>Pleurastrum</taxon>
    </lineage>
</organism>
<evidence type="ECO:0000250" key="1"/>
<evidence type="ECO:0000255" key="2">
    <source>
        <dbReference type="HAMAP-Rule" id="MF_01320"/>
    </source>
</evidence>
<evidence type="ECO:0000256" key="3">
    <source>
        <dbReference type="SAM" id="MobiDB-lite"/>
    </source>
</evidence>
<evidence type="ECO:0000305" key="4"/>
<accession>A6YGC4</accession>
<reference key="1">
    <citation type="journal article" date="2007" name="BMC Genomics">
        <title>The chloroplast genome sequence of the green alga Leptosira terrestris: multiple losses of the inverted repeat and extensive genome rearrangements within the Trebouxiophyceae.</title>
        <authorList>
            <person name="de Cambiaire J.-C."/>
            <person name="Otis C."/>
            <person name="Turmel M."/>
            <person name="Lemieux C."/>
        </authorList>
    </citation>
    <scope>NUCLEOTIDE SEQUENCE [LARGE SCALE GENOMIC DNA]</scope>
    <source>
        <strain>CCAP 463/2 / UTEX 333</strain>
    </source>
</reference>
<feature type="chain" id="PRO_0000310079" description="Large ribosomal subunit protein uL2c">
    <location>
        <begin position="1"/>
        <end position="275"/>
    </location>
</feature>
<feature type="region of interest" description="Disordered" evidence="3">
    <location>
        <begin position="223"/>
        <end position="255"/>
    </location>
</feature>
<gene>
    <name type="primary">rpl2</name>
</gene>
<protein>
    <recommendedName>
        <fullName evidence="2">Large ribosomal subunit protein uL2c</fullName>
    </recommendedName>
    <alternativeName>
        <fullName evidence="4">50S ribosomal protein L2, chloroplastic</fullName>
    </alternativeName>
</protein>
<sequence length="275" mass="30725">MGIRFYKPYTPGTRNRSMAEFDQITETKPEKHLTSWIPRSKGRNNRGIITSRHRGGGHKRLYRNIDFKRNKLGILGQVATIEYDPNRNARIAKVHYQDGEKRYILYPRGLQLGQTILSNFNAPITIGNSLPLHQIPLGTEIHNIELKPGSGGQLARAAGSVAQLVAKEGNFVTLRLPSGEIRLVSKSCWATIGQVGNVEQMNLTVGKAGKSRWLGRRPKVRGVVMNPVDHPHGGGEGRAPIGRSRPVTPWGRPALGQRTRNATKYSRNLIIRRRK</sequence>
<comment type="subunit">
    <text evidence="1">Part of the 50S ribosomal subunit.</text>
</comment>
<comment type="subcellular location">
    <subcellularLocation>
        <location>Plastid</location>
        <location>Chloroplast</location>
    </subcellularLocation>
</comment>
<comment type="similarity">
    <text evidence="4">Belongs to the universal ribosomal protein uL2 family.</text>
</comment>
<dbReference type="EMBL" id="EF506945">
    <property type="protein sequence ID" value="ABO69337.1"/>
    <property type="molecule type" value="Genomic_DNA"/>
</dbReference>
<dbReference type="RefSeq" id="YP_001382201.1">
    <property type="nucleotide sequence ID" value="NC_009681.1"/>
</dbReference>
<dbReference type="SMR" id="A6YGC4"/>
<dbReference type="GeneID" id="5383788"/>
<dbReference type="GO" id="GO:0009507">
    <property type="term" value="C:chloroplast"/>
    <property type="evidence" value="ECO:0007669"/>
    <property type="project" value="UniProtKB-SubCell"/>
</dbReference>
<dbReference type="GO" id="GO:0005762">
    <property type="term" value="C:mitochondrial large ribosomal subunit"/>
    <property type="evidence" value="ECO:0007669"/>
    <property type="project" value="TreeGrafter"/>
</dbReference>
<dbReference type="GO" id="GO:0019843">
    <property type="term" value="F:rRNA binding"/>
    <property type="evidence" value="ECO:0007669"/>
    <property type="project" value="UniProtKB-UniRule"/>
</dbReference>
<dbReference type="GO" id="GO:0003735">
    <property type="term" value="F:structural constituent of ribosome"/>
    <property type="evidence" value="ECO:0007669"/>
    <property type="project" value="InterPro"/>
</dbReference>
<dbReference type="GO" id="GO:0016740">
    <property type="term" value="F:transferase activity"/>
    <property type="evidence" value="ECO:0007669"/>
    <property type="project" value="InterPro"/>
</dbReference>
<dbReference type="GO" id="GO:0032543">
    <property type="term" value="P:mitochondrial translation"/>
    <property type="evidence" value="ECO:0007669"/>
    <property type="project" value="TreeGrafter"/>
</dbReference>
<dbReference type="FunFam" id="2.30.30.30:FF:000001">
    <property type="entry name" value="50S ribosomal protein L2"/>
    <property type="match status" value="1"/>
</dbReference>
<dbReference type="FunFam" id="2.40.50.140:FF:000003">
    <property type="entry name" value="50S ribosomal protein L2"/>
    <property type="match status" value="1"/>
</dbReference>
<dbReference type="FunFam" id="4.10.950.10:FF:000001">
    <property type="entry name" value="50S ribosomal protein L2"/>
    <property type="match status" value="1"/>
</dbReference>
<dbReference type="Gene3D" id="2.30.30.30">
    <property type="match status" value="1"/>
</dbReference>
<dbReference type="Gene3D" id="2.40.50.140">
    <property type="entry name" value="Nucleic acid-binding proteins"/>
    <property type="match status" value="1"/>
</dbReference>
<dbReference type="Gene3D" id="4.10.950.10">
    <property type="entry name" value="Ribosomal protein L2, domain 3"/>
    <property type="match status" value="1"/>
</dbReference>
<dbReference type="HAMAP" id="MF_01320_B">
    <property type="entry name" value="Ribosomal_uL2_B"/>
    <property type="match status" value="1"/>
</dbReference>
<dbReference type="InterPro" id="IPR012340">
    <property type="entry name" value="NA-bd_OB-fold"/>
</dbReference>
<dbReference type="InterPro" id="IPR014722">
    <property type="entry name" value="Rib_uL2_dom2"/>
</dbReference>
<dbReference type="InterPro" id="IPR002171">
    <property type="entry name" value="Ribosomal_uL2"/>
</dbReference>
<dbReference type="InterPro" id="IPR005880">
    <property type="entry name" value="Ribosomal_uL2_bac/org-type"/>
</dbReference>
<dbReference type="InterPro" id="IPR022669">
    <property type="entry name" value="Ribosomal_uL2_C"/>
</dbReference>
<dbReference type="InterPro" id="IPR022671">
    <property type="entry name" value="Ribosomal_uL2_CS"/>
</dbReference>
<dbReference type="InterPro" id="IPR014726">
    <property type="entry name" value="Ribosomal_uL2_dom3"/>
</dbReference>
<dbReference type="InterPro" id="IPR022666">
    <property type="entry name" value="Ribosomal_uL2_RNA-bd_dom"/>
</dbReference>
<dbReference type="InterPro" id="IPR008991">
    <property type="entry name" value="Translation_prot_SH3-like_sf"/>
</dbReference>
<dbReference type="NCBIfam" id="TIGR01171">
    <property type="entry name" value="rplB_bact"/>
    <property type="match status" value="1"/>
</dbReference>
<dbReference type="PANTHER" id="PTHR13691:SF5">
    <property type="entry name" value="LARGE RIBOSOMAL SUBUNIT PROTEIN UL2M"/>
    <property type="match status" value="1"/>
</dbReference>
<dbReference type="PANTHER" id="PTHR13691">
    <property type="entry name" value="RIBOSOMAL PROTEIN L2"/>
    <property type="match status" value="1"/>
</dbReference>
<dbReference type="Pfam" id="PF00181">
    <property type="entry name" value="Ribosomal_L2"/>
    <property type="match status" value="1"/>
</dbReference>
<dbReference type="Pfam" id="PF03947">
    <property type="entry name" value="Ribosomal_L2_C"/>
    <property type="match status" value="1"/>
</dbReference>
<dbReference type="PIRSF" id="PIRSF002158">
    <property type="entry name" value="Ribosomal_L2"/>
    <property type="match status" value="1"/>
</dbReference>
<dbReference type="SMART" id="SM01383">
    <property type="entry name" value="Ribosomal_L2"/>
    <property type="match status" value="1"/>
</dbReference>
<dbReference type="SMART" id="SM01382">
    <property type="entry name" value="Ribosomal_L2_C"/>
    <property type="match status" value="1"/>
</dbReference>
<dbReference type="SUPFAM" id="SSF50249">
    <property type="entry name" value="Nucleic acid-binding proteins"/>
    <property type="match status" value="1"/>
</dbReference>
<dbReference type="SUPFAM" id="SSF50104">
    <property type="entry name" value="Translation proteins SH3-like domain"/>
    <property type="match status" value="1"/>
</dbReference>
<dbReference type="PROSITE" id="PS00467">
    <property type="entry name" value="RIBOSOMAL_L2"/>
    <property type="match status" value="1"/>
</dbReference>
<keyword id="KW-0150">Chloroplast</keyword>
<keyword id="KW-0934">Plastid</keyword>
<keyword id="KW-0687">Ribonucleoprotein</keyword>
<keyword id="KW-0689">Ribosomal protein</keyword>
<proteinExistence type="inferred from homology"/>
<name>RK2_PLETE</name>